<gene>
    <name type="primary">cobD</name>
    <name type="synonym">bluD</name>
    <name type="ordered locus">RCAP_rcc02054</name>
</gene>
<comment type="function">
    <text evidence="1">Converts cobyric acid to cobinamide by the addition of aminopropanol on the F carboxylic group.</text>
</comment>
<comment type="pathway">
    <text>Cofactor biosynthesis; adenosylcobalamin biosynthesis.</text>
</comment>
<comment type="subcellular location">
    <subcellularLocation>
        <location evidence="3">Cell membrane</location>
        <topology evidence="3">Multi-pass membrane protein</topology>
    </subcellularLocation>
</comment>
<comment type="similarity">
    <text evidence="3">Belongs to the CobD/CbiB family.</text>
</comment>
<feature type="chain" id="PRO_0000409929" description="Cobalamin biosynthesis protein CobD">
    <location>
        <begin position="1"/>
        <end position="314"/>
    </location>
</feature>
<feature type="transmembrane region" description="Helical" evidence="2">
    <location>
        <begin position="3"/>
        <end position="23"/>
    </location>
</feature>
<feature type="transmembrane region" description="Helical" evidence="2">
    <location>
        <begin position="57"/>
        <end position="77"/>
    </location>
</feature>
<feature type="transmembrane region" description="Helical" evidence="2">
    <location>
        <begin position="78"/>
        <end position="98"/>
    </location>
</feature>
<feature type="transmembrane region" description="Helical" evidence="2">
    <location>
        <begin position="154"/>
        <end position="174"/>
    </location>
</feature>
<feature type="transmembrane region" description="Helical" evidence="2">
    <location>
        <begin position="290"/>
        <end position="310"/>
    </location>
</feature>
<protein>
    <recommendedName>
        <fullName>Cobalamin biosynthesis protein CobD</fullName>
    </recommendedName>
</protein>
<reference key="1">
    <citation type="journal article" date="1997" name="Proc. Natl. Acad. Sci. U.S.A.">
        <title>Sequence of a 189-kb segment of the chromosome of Rhodobacter capsulatus SB1003.</title>
        <authorList>
            <person name="Vlcek C."/>
            <person name="Paces V."/>
            <person name="Maltsev N."/>
            <person name="Paces J."/>
            <person name="Haselkorn R."/>
            <person name="Fonstein M."/>
        </authorList>
    </citation>
    <scope>NUCLEOTIDE SEQUENCE [GENOMIC DNA]</scope>
    <source>
        <strain>ATCC BAA-309 / NBRC 16581 / SB1003</strain>
    </source>
</reference>
<reference key="2">
    <citation type="journal article" date="2010" name="J. Bacteriol.">
        <title>Complete genome sequence of the photosynthetic purple nonsulfur bacterium Rhodobacter capsulatus SB 1003.</title>
        <authorList>
            <person name="Strnad H."/>
            <person name="Lapidus A."/>
            <person name="Paces J."/>
            <person name="Ulbrich P."/>
            <person name="Vlcek C."/>
            <person name="Paces V."/>
            <person name="Haselkorn R."/>
        </authorList>
    </citation>
    <scope>NUCLEOTIDE SEQUENCE [LARGE SCALE GENOMIC DNA]</scope>
    <source>
        <strain>ATCC BAA-309 / NBRC 16581 / SB1003</strain>
    </source>
</reference>
<dbReference type="EMBL" id="AF010496">
    <property type="protein sequence ID" value="AAC16177.1"/>
    <property type="molecule type" value="Genomic_DNA"/>
</dbReference>
<dbReference type="EMBL" id="CP001312">
    <property type="protein sequence ID" value="ADE85798.1"/>
    <property type="molecule type" value="Genomic_DNA"/>
</dbReference>
<dbReference type="PIR" id="T03524">
    <property type="entry name" value="T03524"/>
</dbReference>
<dbReference type="STRING" id="272942.RCAP_rcc02054"/>
<dbReference type="GeneID" id="31490916"/>
<dbReference type="KEGG" id="rcp:RCAP_rcc02054"/>
<dbReference type="eggNOG" id="COG1270">
    <property type="taxonomic scope" value="Bacteria"/>
</dbReference>
<dbReference type="HOGENOM" id="CLU_054212_0_1_5"/>
<dbReference type="OrthoDB" id="9811967at2"/>
<dbReference type="UniPathway" id="UPA00148"/>
<dbReference type="Proteomes" id="UP000002361">
    <property type="component" value="Chromosome"/>
</dbReference>
<dbReference type="GO" id="GO:0005886">
    <property type="term" value="C:plasma membrane"/>
    <property type="evidence" value="ECO:0007669"/>
    <property type="project" value="UniProtKB-SubCell"/>
</dbReference>
<dbReference type="GO" id="GO:0015420">
    <property type="term" value="F:ABC-type vitamin B12 transporter activity"/>
    <property type="evidence" value="ECO:0007669"/>
    <property type="project" value="UniProtKB-UniRule"/>
</dbReference>
<dbReference type="GO" id="GO:0048472">
    <property type="term" value="F:threonine-phosphate decarboxylase activity"/>
    <property type="evidence" value="ECO:0007669"/>
    <property type="project" value="InterPro"/>
</dbReference>
<dbReference type="GO" id="GO:0009236">
    <property type="term" value="P:cobalamin biosynthetic process"/>
    <property type="evidence" value="ECO:0007669"/>
    <property type="project" value="UniProtKB-UniRule"/>
</dbReference>
<dbReference type="HAMAP" id="MF_00024">
    <property type="entry name" value="CobD_CbiB"/>
    <property type="match status" value="1"/>
</dbReference>
<dbReference type="InterPro" id="IPR004485">
    <property type="entry name" value="Cobalamin_biosynth_CobD/CbiB"/>
</dbReference>
<dbReference type="NCBIfam" id="TIGR00380">
    <property type="entry name" value="cobal_cbiB"/>
    <property type="match status" value="1"/>
</dbReference>
<dbReference type="PANTHER" id="PTHR34308">
    <property type="entry name" value="COBALAMIN BIOSYNTHESIS PROTEIN CBIB"/>
    <property type="match status" value="1"/>
</dbReference>
<dbReference type="PANTHER" id="PTHR34308:SF1">
    <property type="entry name" value="COBALAMIN BIOSYNTHESIS PROTEIN CBIB"/>
    <property type="match status" value="1"/>
</dbReference>
<dbReference type="Pfam" id="PF03186">
    <property type="entry name" value="CobD_Cbib"/>
    <property type="match status" value="1"/>
</dbReference>
<sequence>MNFAAMMVVAIGIDLALGWPDALYKRIGHPVTWIGALIARLEKGWNFKGRLRRLRGVLVALAVIGTTVVIALAVQLWLPAGWPGVLIGGILAWPFVALRSMHDHVAAVAKPLIAGDLPGARQAVSMIVGRDPSQLDQPGVARAALESLAENSSDGIVAPLFWGCVAGLPGIAGYKAINTLDSMIGHRTDRYEEFGWASARIDDLVNLIPARLTGLFFALASPCRARALAVMARDARSHRSPNAGWPEAAMAGALAVRLSGPRIYADRVANEPWLNGTAPDPRPADLARGLALYRRAMAGMTLVIGLVAVLWSVS</sequence>
<accession>D5AV16</accession>
<accession>O68090</accession>
<accession>Q52683</accession>
<name>COBD_RHOCB</name>
<proteinExistence type="inferred from homology"/>
<evidence type="ECO:0000250" key="1"/>
<evidence type="ECO:0000255" key="2"/>
<evidence type="ECO:0000305" key="3"/>
<keyword id="KW-1003">Cell membrane</keyword>
<keyword id="KW-0169">Cobalamin biosynthesis</keyword>
<keyword id="KW-0472">Membrane</keyword>
<keyword id="KW-1185">Reference proteome</keyword>
<keyword id="KW-0812">Transmembrane</keyword>
<keyword id="KW-1133">Transmembrane helix</keyword>
<organism>
    <name type="scientific">Rhodobacter capsulatus (strain ATCC BAA-309 / NBRC 16581 / SB1003)</name>
    <dbReference type="NCBI Taxonomy" id="272942"/>
    <lineage>
        <taxon>Bacteria</taxon>
        <taxon>Pseudomonadati</taxon>
        <taxon>Pseudomonadota</taxon>
        <taxon>Alphaproteobacteria</taxon>
        <taxon>Rhodobacterales</taxon>
        <taxon>Rhodobacter group</taxon>
        <taxon>Rhodobacter</taxon>
    </lineage>
</organism>